<protein>
    <recommendedName>
        <fullName evidence="1">Chaperone protein HtpG</fullName>
    </recommendedName>
    <alternativeName>
        <fullName evidence="1">Heat shock protein HtpG</fullName>
    </alternativeName>
    <alternativeName>
        <fullName evidence="1">High temperature protein G</fullName>
    </alternativeName>
</protein>
<evidence type="ECO:0000255" key="1">
    <source>
        <dbReference type="HAMAP-Rule" id="MF_00505"/>
    </source>
</evidence>
<organism>
    <name type="scientific">Photorhabdus laumondii subsp. laumondii (strain DSM 15139 / CIP 105565 / TT01)</name>
    <name type="common">Photorhabdus luminescens subsp. laumondii</name>
    <dbReference type="NCBI Taxonomy" id="243265"/>
    <lineage>
        <taxon>Bacteria</taxon>
        <taxon>Pseudomonadati</taxon>
        <taxon>Pseudomonadota</taxon>
        <taxon>Gammaproteobacteria</taxon>
        <taxon>Enterobacterales</taxon>
        <taxon>Morganellaceae</taxon>
        <taxon>Photorhabdus</taxon>
    </lineage>
</organism>
<accession>Q7N0P4</accession>
<gene>
    <name evidence="1" type="primary">htpG</name>
    <name type="ordered locus">plu3837</name>
</gene>
<name>HTPG_PHOLL</name>
<feature type="chain" id="PRO_0000063001" description="Chaperone protein HtpG">
    <location>
        <begin position="1"/>
        <end position="630"/>
    </location>
</feature>
<feature type="region of interest" description="A; substrate-binding" evidence="1">
    <location>
        <begin position="1"/>
        <end position="339"/>
    </location>
</feature>
<feature type="region of interest" description="B" evidence="1">
    <location>
        <begin position="340"/>
        <end position="555"/>
    </location>
</feature>
<feature type="region of interest" description="C" evidence="1">
    <location>
        <begin position="556"/>
        <end position="630"/>
    </location>
</feature>
<reference key="1">
    <citation type="journal article" date="2003" name="Nat. Biotechnol.">
        <title>The genome sequence of the entomopathogenic bacterium Photorhabdus luminescens.</title>
        <authorList>
            <person name="Duchaud E."/>
            <person name="Rusniok C."/>
            <person name="Frangeul L."/>
            <person name="Buchrieser C."/>
            <person name="Givaudan A."/>
            <person name="Taourit S."/>
            <person name="Bocs S."/>
            <person name="Boursaux-Eude C."/>
            <person name="Chandler M."/>
            <person name="Charles J.-F."/>
            <person name="Dassa E."/>
            <person name="Derose R."/>
            <person name="Derzelle S."/>
            <person name="Freyssinet G."/>
            <person name="Gaudriault S."/>
            <person name="Medigue C."/>
            <person name="Lanois A."/>
            <person name="Powell K."/>
            <person name="Siguier P."/>
            <person name="Vincent R."/>
            <person name="Wingate V."/>
            <person name="Zouine M."/>
            <person name="Glaser P."/>
            <person name="Boemare N."/>
            <person name="Danchin A."/>
            <person name="Kunst F."/>
        </authorList>
    </citation>
    <scope>NUCLEOTIDE SEQUENCE [LARGE SCALE GENOMIC DNA]</scope>
    <source>
        <strain>DSM 15139 / CIP 105565 / TT01</strain>
    </source>
</reference>
<proteinExistence type="inferred from homology"/>
<comment type="function">
    <text evidence="1">Molecular chaperone. Has ATPase activity.</text>
</comment>
<comment type="subunit">
    <text evidence="1">Homodimer.</text>
</comment>
<comment type="subcellular location">
    <subcellularLocation>
        <location evidence="1">Cytoplasm</location>
    </subcellularLocation>
</comment>
<comment type="similarity">
    <text evidence="1">Belongs to the heat shock protein 90 family.</text>
</comment>
<dbReference type="EMBL" id="BX571871">
    <property type="protein sequence ID" value="CAE16209.1"/>
    <property type="molecule type" value="Genomic_DNA"/>
</dbReference>
<dbReference type="RefSeq" id="WP_011147976.1">
    <property type="nucleotide sequence ID" value="NC_005126.1"/>
</dbReference>
<dbReference type="SMR" id="Q7N0P4"/>
<dbReference type="STRING" id="243265.plu3837"/>
<dbReference type="GeneID" id="48850067"/>
<dbReference type="KEGG" id="plu:plu3837"/>
<dbReference type="eggNOG" id="COG0326">
    <property type="taxonomic scope" value="Bacteria"/>
</dbReference>
<dbReference type="HOGENOM" id="CLU_006684_3_0_6"/>
<dbReference type="Proteomes" id="UP000002514">
    <property type="component" value="Chromosome"/>
</dbReference>
<dbReference type="GO" id="GO:0005737">
    <property type="term" value="C:cytoplasm"/>
    <property type="evidence" value="ECO:0007669"/>
    <property type="project" value="UniProtKB-SubCell"/>
</dbReference>
<dbReference type="GO" id="GO:0005524">
    <property type="term" value="F:ATP binding"/>
    <property type="evidence" value="ECO:0007669"/>
    <property type="project" value="UniProtKB-UniRule"/>
</dbReference>
<dbReference type="GO" id="GO:0016887">
    <property type="term" value="F:ATP hydrolysis activity"/>
    <property type="evidence" value="ECO:0007669"/>
    <property type="project" value="InterPro"/>
</dbReference>
<dbReference type="GO" id="GO:0140662">
    <property type="term" value="F:ATP-dependent protein folding chaperone"/>
    <property type="evidence" value="ECO:0007669"/>
    <property type="project" value="InterPro"/>
</dbReference>
<dbReference type="GO" id="GO:0051082">
    <property type="term" value="F:unfolded protein binding"/>
    <property type="evidence" value="ECO:0007669"/>
    <property type="project" value="UniProtKB-UniRule"/>
</dbReference>
<dbReference type="CDD" id="cd16927">
    <property type="entry name" value="HATPase_Hsp90-like"/>
    <property type="match status" value="1"/>
</dbReference>
<dbReference type="FunFam" id="1.20.120.790:FF:000002">
    <property type="entry name" value="Molecular chaperone HtpG"/>
    <property type="match status" value="1"/>
</dbReference>
<dbReference type="FunFam" id="3.30.230.80:FF:000002">
    <property type="entry name" value="Molecular chaperone HtpG"/>
    <property type="match status" value="1"/>
</dbReference>
<dbReference type="FunFam" id="3.30.565.10:FF:000009">
    <property type="entry name" value="Molecular chaperone HtpG"/>
    <property type="match status" value="1"/>
</dbReference>
<dbReference type="FunFam" id="3.40.50.11260:FF:000002">
    <property type="entry name" value="Molecular chaperone HtpG"/>
    <property type="match status" value="1"/>
</dbReference>
<dbReference type="Gene3D" id="3.30.230.80">
    <property type="match status" value="1"/>
</dbReference>
<dbReference type="Gene3D" id="3.40.50.11260">
    <property type="match status" value="1"/>
</dbReference>
<dbReference type="Gene3D" id="1.20.120.790">
    <property type="entry name" value="Heat shock protein 90, C-terminal domain"/>
    <property type="match status" value="1"/>
</dbReference>
<dbReference type="Gene3D" id="3.30.565.10">
    <property type="entry name" value="Histidine kinase-like ATPase, C-terminal domain"/>
    <property type="match status" value="1"/>
</dbReference>
<dbReference type="HAMAP" id="MF_00505">
    <property type="entry name" value="HSP90"/>
    <property type="match status" value="1"/>
</dbReference>
<dbReference type="InterPro" id="IPR036890">
    <property type="entry name" value="HATPase_C_sf"/>
</dbReference>
<dbReference type="InterPro" id="IPR019805">
    <property type="entry name" value="Heat_shock_protein_90_CS"/>
</dbReference>
<dbReference type="InterPro" id="IPR037196">
    <property type="entry name" value="HSP90_C"/>
</dbReference>
<dbReference type="InterPro" id="IPR001404">
    <property type="entry name" value="Hsp90_fam"/>
</dbReference>
<dbReference type="InterPro" id="IPR020575">
    <property type="entry name" value="Hsp90_N"/>
</dbReference>
<dbReference type="InterPro" id="IPR020568">
    <property type="entry name" value="Ribosomal_Su5_D2-typ_SF"/>
</dbReference>
<dbReference type="NCBIfam" id="NF003555">
    <property type="entry name" value="PRK05218.1"/>
    <property type="match status" value="1"/>
</dbReference>
<dbReference type="PANTHER" id="PTHR11528">
    <property type="entry name" value="HEAT SHOCK PROTEIN 90 FAMILY MEMBER"/>
    <property type="match status" value="1"/>
</dbReference>
<dbReference type="Pfam" id="PF13589">
    <property type="entry name" value="HATPase_c_3"/>
    <property type="match status" value="1"/>
</dbReference>
<dbReference type="Pfam" id="PF00183">
    <property type="entry name" value="HSP90"/>
    <property type="match status" value="1"/>
</dbReference>
<dbReference type="PIRSF" id="PIRSF002583">
    <property type="entry name" value="Hsp90"/>
    <property type="match status" value="1"/>
</dbReference>
<dbReference type="PRINTS" id="PR00775">
    <property type="entry name" value="HEATSHOCK90"/>
</dbReference>
<dbReference type="SMART" id="SM00387">
    <property type="entry name" value="HATPase_c"/>
    <property type="match status" value="1"/>
</dbReference>
<dbReference type="SUPFAM" id="SSF55874">
    <property type="entry name" value="ATPase domain of HSP90 chaperone/DNA topoisomerase II/histidine kinase"/>
    <property type="match status" value="1"/>
</dbReference>
<dbReference type="SUPFAM" id="SSF110942">
    <property type="entry name" value="HSP90 C-terminal domain"/>
    <property type="match status" value="1"/>
</dbReference>
<dbReference type="SUPFAM" id="SSF54211">
    <property type="entry name" value="Ribosomal protein S5 domain 2-like"/>
    <property type="match status" value="1"/>
</dbReference>
<dbReference type="PROSITE" id="PS00298">
    <property type="entry name" value="HSP90"/>
    <property type="match status" value="1"/>
</dbReference>
<sequence length="630" mass="72307">MKGQETRGFQSEVKQLLQLMIHSLYSNKEIFLRELISNASDAADKLRFRALSVPKLYENDGELRVRLSFDKEKRCITISDNGIGMTRDEVIDNLGTIAKSGTKAFLESIGSDQAKDSQLIGQFGVGFYSAFIVSDKVTVRTRAAGASIDQGVFWESAGEGDYTIADIEKETRGTEITLHLREGEDEFLNDWRLRSVISKYSDHIALPVEIETKNKSEEEGEEDTVTWEKINKAQALWTRGKSEITDEEYKEFYKHISHDFTDPLIWSHNRVEGKQEYTSMLYIPSQAPWDMWNREHKHGLKLYVQRVFIMDDAEQFMPNYLRFVRGLIDSNDLPLNVSREILQDNSITRNLRNALTKRALQMLDKLAKDDAEKYQQFWQQFGLVMKEGPAEDSTNKEAIAKLLRFASTHNDSSAQTVSLEEYVSRMTEGQDKIYYITADSYAAAKNSPHLELFRKKGIEVLLLSERIDEWMMGYLTDFDGKKFQSVSKADESLDKLADENKAEQEEIEKQLEPFVERVKTLLGDRVKEVKLTHRLTDTPAIVTTNVDEMSTQMAKLFAAAGQQVPDVKYNFELNPDHQLVKLAADISDEVQFADWIELLLDQALFAERGTLEDPNQFIRRMNQLLLSEKA</sequence>
<keyword id="KW-0067">ATP-binding</keyword>
<keyword id="KW-0143">Chaperone</keyword>
<keyword id="KW-0963">Cytoplasm</keyword>
<keyword id="KW-0547">Nucleotide-binding</keyword>
<keyword id="KW-1185">Reference proteome</keyword>
<keyword id="KW-0346">Stress response</keyword>